<reference key="1">
    <citation type="journal article" date="2009" name="J. Bacteriol.">
        <title>Genomic sequencing reveals regulatory mutations and recombinational events in the widely used MC4100 lineage of Escherichia coli K-12.</title>
        <authorList>
            <person name="Ferenci T."/>
            <person name="Zhou Z."/>
            <person name="Betteridge T."/>
            <person name="Ren Y."/>
            <person name="Liu Y."/>
            <person name="Feng L."/>
            <person name="Reeves P.R."/>
            <person name="Wang L."/>
        </authorList>
    </citation>
    <scope>NUCLEOTIDE SEQUENCE [LARGE SCALE GENOMIC DNA]</scope>
    <source>
        <strain>K12 / MC4100 / BW2952</strain>
    </source>
</reference>
<sequence>MSAIENFDAHTPMMQQYLRLKAQHPEILLFYRMGDFYELFYDDAKRASQLLDISLTKRGASAGEPIPMAGIPYHAVENYLAKLVNQGESVAICEQIGDPATSKGPVERKVVRIVTPGTISDEALLQERQDNLLAAIWQDSKGFGYATLDISSGRFRLSEPADRETMAAELQRTNPAELLYAEDFAEMSLIEGRRGLRRRPLWEFEIDTARQQLNLQFGTRDLVGFGVENAPRGLCAAGCLLQYAKDTQRTTLPHIRSITMEREQDSIIMDAATRRNLEITQNLAGGAENTLASVLDCTVTPMGSRMLKRWLHMPVRDTRVLLERQQTIGALQDFTAGLQPVLRQVGDLERILARLALRTARPRDLARMRHAFQQLPELRAQLETVDSAPVQALREKMGEFAELRDLLERAIIDTPPVLVRDGGVIASGYNEELDEWRALADGATDYLERLEVRERERTGLDTLKVGFNAVHGYYIQISRGQSHLAPINYMRRQTLKNAERYIIPELKEYEDKVLTSKGKALALEKQLYEELFDLLLPHLEALQQSASALAELDVLVNLAERAYTLNYTCPTFIDKPGIRITEGRHPVVEQVLNEPFIANPLNLSPQRRMLIITGPNMGGKSTYMRQTALIALMAYIGSYVPAQKVEIGPIDRIFTRVGAADDLASGRSTFMVEMTETANILHNATEYSLVLMDEIGRGTSTYDGLSLAWACAENLANKIKALTLFATHYFELTQLPEKMEGVANVHLDALEHGDTIAFMHSVQDGAASKSYGLAVAALAGVPKEVIKRARQKLRELESISPNAAATQVDGTQMSLLSVPEETSPAVEALENLDPDSLTPRQALEWIYRLKSLV</sequence>
<dbReference type="EMBL" id="CP001396">
    <property type="protein sequence ID" value="ACR63763.1"/>
    <property type="molecule type" value="Genomic_DNA"/>
</dbReference>
<dbReference type="RefSeq" id="WP_001272928.1">
    <property type="nucleotide sequence ID" value="NC_012759.1"/>
</dbReference>
<dbReference type="SMR" id="C4ZZN7"/>
<dbReference type="KEGG" id="ebw:BWG_2469"/>
<dbReference type="HOGENOM" id="CLU_002472_4_0_6"/>
<dbReference type="GO" id="GO:0005829">
    <property type="term" value="C:cytosol"/>
    <property type="evidence" value="ECO:0007669"/>
    <property type="project" value="TreeGrafter"/>
</dbReference>
<dbReference type="GO" id="GO:0005524">
    <property type="term" value="F:ATP binding"/>
    <property type="evidence" value="ECO:0007669"/>
    <property type="project" value="UniProtKB-UniRule"/>
</dbReference>
<dbReference type="GO" id="GO:0140664">
    <property type="term" value="F:ATP-dependent DNA damage sensor activity"/>
    <property type="evidence" value="ECO:0007669"/>
    <property type="project" value="InterPro"/>
</dbReference>
<dbReference type="GO" id="GO:0003684">
    <property type="term" value="F:damaged DNA binding"/>
    <property type="evidence" value="ECO:0007669"/>
    <property type="project" value="UniProtKB-UniRule"/>
</dbReference>
<dbReference type="GO" id="GO:0030983">
    <property type="term" value="F:mismatched DNA binding"/>
    <property type="evidence" value="ECO:0007669"/>
    <property type="project" value="InterPro"/>
</dbReference>
<dbReference type="GO" id="GO:0006298">
    <property type="term" value="P:mismatch repair"/>
    <property type="evidence" value="ECO:0007669"/>
    <property type="project" value="UniProtKB-UniRule"/>
</dbReference>
<dbReference type="CDD" id="cd03284">
    <property type="entry name" value="ABC_MutS1"/>
    <property type="match status" value="1"/>
</dbReference>
<dbReference type="FunFam" id="1.10.1420.10:FF:000002">
    <property type="entry name" value="DNA mismatch repair protein MutS"/>
    <property type="match status" value="1"/>
</dbReference>
<dbReference type="FunFam" id="3.30.420.110:FF:000001">
    <property type="entry name" value="DNA mismatch repair protein MutS"/>
    <property type="match status" value="1"/>
</dbReference>
<dbReference type="FunFam" id="3.40.1170.10:FF:000001">
    <property type="entry name" value="DNA mismatch repair protein MutS"/>
    <property type="match status" value="1"/>
</dbReference>
<dbReference type="FunFam" id="3.40.50.300:FF:000283">
    <property type="entry name" value="DNA mismatch repair protein MutS"/>
    <property type="match status" value="1"/>
</dbReference>
<dbReference type="Gene3D" id="1.10.1420.10">
    <property type="match status" value="2"/>
</dbReference>
<dbReference type="Gene3D" id="6.10.140.430">
    <property type="match status" value="1"/>
</dbReference>
<dbReference type="Gene3D" id="3.40.1170.10">
    <property type="entry name" value="DNA repair protein MutS, domain I"/>
    <property type="match status" value="1"/>
</dbReference>
<dbReference type="Gene3D" id="3.30.420.110">
    <property type="entry name" value="MutS, connector domain"/>
    <property type="match status" value="1"/>
</dbReference>
<dbReference type="Gene3D" id="3.40.50.300">
    <property type="entry name" value="P-loop containing nucleotide triphosphate hydrolases"/>
    <property type="match status" value="1"/>
</dbReference>
<dbReference type="HAMAP" id="MF_00096">
    <property type="entry name" value="MutS"/>
    <property type="match status" value="1"/>
</dbReference>
<dbReference type="InterPro" id="IPR005748">
    <property type="entry name" value="DNA_mismatch_repair_MutS"/>
</dbReference>
<dbReference type="InterPro" id="IPR007695">
    <property type="entry name" value="DNA_mismatch_repair_MutS-lik_N"/>
</dbReference>
<dbReference type="InterPro" id="IPR017261">
    <property type="entry name" value="DNA_mismatch_repair_MutS/MSH"/>
</dbReference>
<dbReference type="InterPro" id="IPR000432">
    <property type="entry name" value="DNA_mismatch_repair_MutS_C"/>
</dbReference>
<dbReference type="InterPro" id="IPR007861">
    <property type="entry name" value="DNA_mismatch_repair_MutS_clamp"/>
</dbReference>
<dbReference type="InterPro" id="IPR007696">
    <property type="entry name" value="DNA_mismatch_repair_MutS_core"/>
</dbReference>
<dbReference type="InterPro" id="IPR016151">
    <property type="entry name" value="DNA_mismatch_repair_MutS_N"/>
</dbReference>
<dbReference type="InterPro" id="IPR036187">
    <property type="entry name" value="DNA_mismatch_repair_MutS_sf"/>
</dbReference>
<dbReference type="InterPro" id="IPR007860">
    <property type="entry name" value="DNA_mmatch_repair_MutS_con_dom"/>
</dbReference>
<dbReference type="InterPro" id="IPR045076">
    <property type="entry name" value="MutS"/>
</dbReference>
<dbReference type="InterPro" id="IPR036678">
    <property type="entry name" value="MutS_con_dom_sf"/>
</dbReference>
<dbReference type="InterPro" id="IPR027417">
    <property type="entry name" value="P-loop_NTPase"/>
</dbReference>
<dbReference type="NCBIfam" id="TIGR01070">
    <property type="entry name" value="mutS1"/>
    <property type="match status" value="1"/>
</dbReference>
<dbReference type="NCBIfam" id="NF003810">
    <property type="entry name" value="PRK05399.1"/>
    <property type="match status" value="1"/>
</dbReference>
<dbReference type="PANTHER" id="PTHR11361:SF34">
    <property type="entry name" value="DNA MISMATCH REPAIR PROTEIN MSH1, MITOCHONDRIAL"/>
    <property type="match status" value="1"/>
</dbReference>
<dbReference type="PANTHER" id="PTHR11361">
    <property type="entry name" value="DNA MISMATCH REPAIR PROTEIN MUTS FAMILY MEMBER"/>
    <property type="match status" value="1"/>
</dbReference>
<dbReference type="Pfam" id="PF01624">
    <property type="entry name" value="MutS_I"/>
    <property type="match status" value="1"/>
</dbReference>
<dbReference type="Pfam" id="PF05188">
    <property type="entry name" value="MutS_II"/>
    <property type="match status" value="1"/>
</dbReference>
<dbReference type="Pfam" id="PF05192">
    <property type="entry name" value="MutS_III"/>
    <property type="match status" value="1"/>
</dbReference>
<dbReference type="Pfam" id="PF05190">
    <property type="entry name" value="MutS_IV"/>
    <property type="match status" value="1"/>
</dbReference>
<dbReference type="Pfam" id="PF00488">
    <property type="entry name" value="MutS_V"/>
    <property type="match status" value="1"/>
</dbReference>
<dbReference type="PIRSF" id="PIRSF037677">
    <property type="entry name" value="DNA_mis_repair_Msh6"/>
    <property type="match status" value="1"/>
</dbReference>
<dbReference type="SMART" id="SM00534">
    <property type="entry name" value="MUTSac"/>
    <property type="match status" value="1"/>
</dbReference>
<dbReference type="SMART" id="SM00533">
    <property type="entry name" value="MUTSd"/>
    <property type="match status" value="1"/>
</dbReference>
<dbReference type="SUPFAM" id="SSF55271">
    <property type="entry name" value="DNA repair protein MutS, domain I"/>
    <property type="match status" value="1"/>
</dbReference>
<dbReference type="SUPFAM" id="SSF53150">
    <property type="entry name" value="DNA repair protein MutS, domain II"/>
    <property type="match status" value="1"/>
</dbReference>
<dbReference type="SUPFAM" id="SSF48334">
    <property type="entry name" value="DNA repair protein MutS, domain III"/>
    <property type="match status" value="1"/>
</dbReference>
<dbReference type="SUPFAM" id="SSF52540">
    <property type="entry name" value="P-loop containing nucleoside triphosphate hydrolases"/>
    <property type="match status" value="1"/>
</dbReference>
<dbReference type="PROSITE" id="PS00486">
    <property type="entry name" value="DNA_MISMATCH_REPAIR_2"/>
    <property type="match status" value="1"/>
</dbReference>
<keyword id="KW-0067">ATP-binding</keyword>
<keyword id="KW-0227">DNA damage</keyword>
<keyword id="KW-0234">DNA repair</keyword>
<keyword id="KW-0238">DNA-binding</keyword>
<keyword id="KW-0547">Nucleotide-binding</keyword>
<feature type="chain" id="PRO_1000202734" description="DNA mismatch repair protein MutS">
    <location>
        <begin position="1"/>
        <end position="853"/>
    </location>
</feature>
<feature type="binding site" evidence="1">
    <location>
        <begin position="614"/>
        <end position="621"/>
    </location>
    <ligand>
        <name>ATP</name>
        <dbReference type="ChEBI" id="CHEBI:30616"/>
    </ligand>
</feature>
<name>MUTS_ECOBW</name>
<comment type="function">
    <text evidence="1">This protein is involved in the repair of mismatches in DNA. It is possible that it carries out the mismatch recognition step. This protein has a weak ATPase activity.</text>
</comment>
<comment type="similarity">
    <text evidence="1">Belongs to the DNA mismatch repair MutS family.</text>
</comment>
<accession>C4ZZN7</accession>
<organism>
    <name type="scientific">Escherichia coli (strain K12 / MC4100 / BW2952)</name>
    <dbReference type="NCBI Taxonomy" id="595496"/>
    <lineage>
        <taxon>Bacteria</taxon>
        <taxon>Pseudomonadati</taxon>
        <taxon>Pseudomonadota</taxon>
        <taxon>Gammaproteobacteria</taxon>
        <taxon>Enterobacterales</taxon>
        <taxon>Enterobacteriaceae</taxon>
        <taxon>Escherichia</taxon>
    </lineage>
</organism>
<proteinExistence type="inferred from homology"/>
<evidence type="ECO:0000255" key="1">
    <source>
        <dbReference type="HAMAP-Rule" id="MF_00096"/>
    </source>
</evidence>
<protein>
    <recommendedName>
        <fullName evidence="1">DNA mismatch repair protein MutS</fullName>
    </recommendedName>
</protein>
<gene>
    <name evidence="1" type="primary">mutS</name>
    <name type="ordered locus">BWG_2469</name>
</gene>